<feature type="chain" id="PRO_0000364091" description="Sodium/proline symporter">
    <location>
        <begin position="1"/>
        <end position="511"/>
    </location>
</feature>
<feature type="transmembrane region" description="Helical" evidence="3">
    <location>
        <begin position="16"/>
        <end position="36"/>
    </location>
</feature>
<feature type="transmembrane region" description="Helical" evidence="3">
    <location>
        <begin position="53"/>
        <end position="73"/>
    </location>
</feature>
<feature type="transmembrane region" description="Helical" evidence="3">
    <location>
        <begin position="84"/>
        <end position="104"/>
    </location>
</feature>
<feature type="transmembrane region" description="Helical" evidence="3">
    <location>
        <begin position="138"/>
        <end position="158"/>
    </location>
</feature>
<feature type="transmembrane region" description="Helical" evidence="3">
    <location>
        <begin position="173"/>
        <end position="193"/>
    </location>
</feature>
<feature type="transmembrane region" description="Helical" evidence="3">
    <location>
        <begin position="199"/>
        <end position="219"/>
    </location>
</feature>
<feature type="transmembrane region" description="Helical" evidence="3">
    <location>
        <begin position="239"/>
        <end position="259"/>
    </location>
</feature>
<feature type="transmembrane region" description="Helical" evidence="3">
    <location>
        <begin position="285"/>
        <end position="305"/>
    </location>
</feature>
<feature type="transmembrane region" description="Helical" evidence="3">
    <location>
        <begin position="326"/>
        <end position="346"/>
    </location>
</feature>
<feature type="transmembrane region" description="Helical" evidence="3">
    <location>
        <begin position="380"/>
        <end position="400"/>
    </location>
</feature>
<feature type="transmembrane region" description="Helical" evidence="3">
    <location>
        <begin position="409"/>
        <end position="429"/>
    </location>
</feature>
<feature type="transmembrane region" description="Helical" evidence="3">
    <location>
        <begin position="437"/>
        <end position="457"/>
    </location>
</feature>
<feature type="transmembrane region" description="Helical" evidence="3">
    <location>
        <begin position="466"/>
        <end position="486"/>
    </location>
</feature>
<accession>Q53584</accession>
<sequence>MLTMGTALSQQVDANWQTYIMIAVYFLILMLLAFTYKQATGNLSEYMLGGRSIGPYITALSAGASDMSGWMIMGLPGSVYSTGLSAMWITIGLTLGAYINYFVVAPRLRVYTELAGDAITLPDFFKNRLNDKNNVLKIISGLIIVVFFTLYTHSGFVSGGKLFESAFGLDYHFGLILVAFIVIFYTFFGGYLAVSITDFFQGVIMLIAMVMVPIVAMMNLNGWGTFHDVAAMKPTNLNLFKGLSFIGIISLFSWGLGYFGQPHIIVRFMSIKSHKMLPKARRLGISWMAVGLLGAVAVGLTGIAFVPAYHIKLEDPETLFIVMSQVLFHPLVGGFLLAAILAAIMSTISSQLLVTSSSLTEDFYKLIRGEEKAKTDQKEFVMIGRLSVLVVAIVAIAIAWNPNDTILNLVGNAWAGFGASFSPLVLFALYWKGLTRAGAVSGMVSGALVVIVWIAWIKPLAHINEIFGLYEIIPGFIVSVIVTYVVSKLTKKPGAFVETDLNKVRDIVREK</sequence>
<evidence type="ECO:0000250" key="1">
    <source>
        <dbReference type="UniProtKB" id="P07117"/>
    </source>
</evidence>
<evidence type="ECO:0000250" key="2">
    <source>
        <dbReference type="UniProtKB" id="Q2FWY7"/>
    </source>
</evidence>
<evidence type="ECO:0000255" key="3"/>
<evidence type="ECO:0000303" key="4">
    <source>
    </source>
</evidence>
<evidence type="ECO:0000305" key="5"/>
<evidence type="ECO:0000305" key="6">
    <source>
    </source>
</evidence>
<protein>
    <recommendedName>
        <fullName>Sodium/proline symporter</fullName>
    </recommendedName>
    <alternativeName>
        <fullName evidence="4">Proline permease</fullName>
    </alternativeName>
</protein>
<comment type="function">
    <text evidence="2 6">Catalyzes the sodium-dependent uptake of extracellular L-proline (Probable). Since most S.aureus strains are L-proline auxotrophs, this transporter may aid the bacterial persistence during an infection of tissues with low proline concentrations (By similarity).</text>
</comment>
<comment type="catalytic activity">
    <reaction evidence="1">
        <text>L-proline(in) + Na(+)(in) = L-proline(out) + Na(+)(out)</text>
        <dbReference type="Rhea" id="RHEA:28967"/>
        <dbReference type="ChEBI" id="CHEBI:29101"/>
        <dbReference type="ChEBI" id="CHEBI:60039"/>
    </reaction>
</comment>
<comment type="subcellular location">
    <subcellularLocation>
        <location evidence="5">Cell membrane</location>
        <topology evidence="3">Multi-pass membrane protein</topology>
    </subcellularLocation>
</comment>
<comment type="similarity">
    <text evidence="5">Belongs to the sodium:solute symporter (SSF) (TC 2.A.21) family.</text>
</comment>
<comment type="sequence caution" evidence="5">
    <conflict type="frameshift">
        <sequence resource="EMBL-CDS" id="AAA79365"/>
    </conflict>
</comment>
<reference key="1">
    <citation type="journal article" date="1995" name="Appl. Environ. Microbiol.">
        <title>Identification of a putP proline permease gene homolog from Staphylococcus aureus by expression cloning of the high-affinity proline transport system in Escherichia coli.</title>
        <authorList>
            <person name="Wengender P.A."/>
            <person name="Miller K.J."/>
        </authorList>
    </citation>
    <scope>NUCLEOTIDE SEQUENCE [GENOMIC DNA]</scope>
    <source>
        <strain>ATCC 12600 / DSM 20231 / IAM 12544 / NCDO 949 / NCTC 8532</strain>
    </source>
</reference>
<dbReference type="EMBL" id="U06451">
    <property type="protein sequence ID" value="AAA79365.1"/>
    <property type="status" value="ALT_FRAME"/>
    <property type="molecule type" value="Genomic_DNA"/>
</dbReference>
<dbReference type="SMR" id="Q53584"/>
<dbReference type="GO" id="GO:0005886">
    <property type="term" value="C:plasma membrane"/>
    <property type="evidence" value="ECO:0007669"/>
    <property type="project" value="UniProtKB-SubCell"/>
</dbReference>
<dbReference type="GO" id="GO:0015193">
    <property type="term" value="F:L-proline transmembrane transporter activity"/>
    <property type="evidence" value="ECO:0007669"/>
    <property type="project" value="TreeGrafter"/>
</dbReference>
<dbReference type="GO" id="GO:0005298">
    <property type="term" value="F:proline:sodium symporter activity"/>
    <property type="evidence" value="ECO:0007669"/>
    <property type="project" value="InterPro"/>
</dbReference>
<dbReference type="GO" id="GO:0031402">
    <property type="term" value="F:sodium ion binding"/>
    <property type="evidence" value="ECO:0007669"/>
    <property type="project" value="InterPro"/>
</dbReference>
<dbReference type="GO" id="GO:0015824">
    <property type="term" value="P:proline transport"/>
    <property type="evidence" value="ECO:0007669"/>
    <property type="project" value="InterPro"/>
</dbReference>
<dbReference type="CDD" id="cd11475">
    <property type="entry name" value="SLC5sbd_PutP"/>
    <property type="match status" value="1"/>
</dbReference>
<dbReference type="FunFam" id="1.20.1730.10:FF:000002">
    <property type="entry name" value="Sodium/proline symporter"/>
    <property type="match status" value="1"/>
</dbReference>
<dbReference type="Gene3D" id="1.20.1730.10">
    <property type="entry name" value="Sodium/glucose cotransporter"/>
    <property type="match status" value="1"/>
</dbReference>
<dbReference type="InterPro" id="IPR038377">
    <property type="entry name" value="Na/Glc_symporter_sf"/>
</dbReference>
<dbReference type="InterPro" id="IPR011851">
    <property type="entry name" value="Na/Pro_symporter"/>
</dbReference>
<dbReference type="InterPro" id="IPR001734">
    <property type="entry name" value="Na/solute_symporter"/>
</dbReference>
<dbReference type="InterPro" id="IPR050277">
    <property type="entry name" value="Sodium:Solute_Symporter"/>
</dbReference>
<dbReference type="NCBIfam" id="TIGR02121">
    <property type="entry name" value="Na_Pro_sym"/>
    <property type="match status" value="1"/>
</dbReference>
<dbReference type="NCBIfam" id="TIGR00813">
    <property type="entry name" value="sss"/>
    <property type="match status" value="1"/>
</dbReference>
<dbReference type="PANTHER" id="PTHR48086">
    <property type="entry name" value="SODIUM/PROLINE SYMPORTER-RELATED"/>
    <property type="match status" value="1"/>
</dbReference>
<dbReference type="PANTHER" id="PTHR48086:SF3">
    <property type="entry name" value="SODIUM_PROLINE SYMPORTER"/>
    <property type="match status" value="1"/>
</dbReference>
<dbReference type="Pfam" id="PF00474">
    <property type="entry name" value="SSF"/>
    <property type="match status" value="1"/>
</dbReference>
<dbReference type="PROSITE" id="PS50283">
    <property type="entry name" value="NA_SOLUT_SYMP_3"/>
    <property type="match status" value="1"/>
</dbReference>
<proteinExistence type="inferred from homology"/>
<keyword id="KW-0029">Amino-acid transport</keyword>
<keyword id="KW-1003">Cell membrane</keyword>
<keyword id="KW-0406">Ion transport</keyword>
<keyword id="KW-0472">Membrane</keyword>
<keyword id="KW-0915">Sodium</keyword>
<keyword id="KW-0739">Sodium transport</keyword>
<keyword id="KW-0769">Symport</keyword>
<keyword id="KW-0812">Transmembrane</keyword>
<keyword id="KW-1133">Transmembrane helix</keyword>
<keyword id="KW-0813">Transport</keyword>
<name>PUTP_STAAU</name>
<gene>
    <name evidence="4" type="primary">putP</name>
</gene>
<organism>
    <name type="scientific">Staphylococcus aureus</name>
    <dbReference type="NCBI Taxonomy" id="1280"/>
    <lineage>
        <taxon>Bacteria</taxon>
        <taxon>Bacillati</taxon>
        <taxon>Bacillota</taxon>
        <taxon>Bacilli</taxon>
        <taxon>Bacillales</taxon>
        <taxon>Staphylococcaceae</taxon>
        <taxon>Staphylococcus</taxon>
    </lineage>
</organism>